<dbReference type="EMBL" id="CP000828">
    <property type="protein sequence ID" value="ABW27637.1"/>
    <property type="molecule type" value="Genomic_DNA"/>
</dbReference>
<dbReference type="RefSeq" id="WP_010476188.1">
    <property type="nucleotide sequence ID" value="NC_009925.1"/>
</dbReference>
<dbReference type="PDB" id="7YMI">
    <property type="method" value="EM"/>
    <property type="resolution" value="3.30 A"/>
    <property type="chains" value="E/e=1-83"/>
</dbReference>
<dbReference type="PDB" id="7YMM">
    <property type="method" value="EM"/>
    <property type="resolution" value="3.60 A"/>
    <property type="chains" value="1E/2E/3E/4E=1-83"/>
</dbReference>
<dbReference type="PDBsum" id="7YMI"/>
<dbReference type="PDBsum" id="7YMM"/>
<dbReference type="EMDB" id="EMD-33929"/>
<dbReference type="EMDB" id="EMD-33933"/>
<dbReference type="SMR" id="B0C6T2"/>
<dbReference type="STRING" id="329726.AM1_2630"/>
<dbReference type="KEGG" id="amr:AM1_2630"/>
<dbReference type="eggNOG" id="ENOG5032RR6">
    <property type="taxonomic scope" value="Bacteria"/>
</dbReference>
<dbReference type="HOGENOM" id="CLU_194095_0_0_3"/>
<dbReference type="OrthoDB" id="514620at2"/>
<dbReference type="Proteomes" id="UP000000268">
    <property type="component" value="Chromosome"/>
</dbReference>
<dbReference type="GO" id="GO:0009539">
    <property type="term" value="C:photosystem II reaction center"/>
    <property type="evidence" value="ECO:0007669"/>
    <property type="project" value="InterPro"/>
</dbReference>
<dbReference type="GO" id="GO:0031676">
    <property type="term" value="C:plasma membrane-derived thylakoid membrane"/>
    <property type="evidence" value="ECO:0007669"/>
    <property type="project" value="UniProtKB-SubCell"/>
</dbReference>
<dbReference type="GO" id="GO:0009055">
    <property type="term" value="F:electron transfer activity"/>
    <property type="evidence" value="ECO:0007669"/>
    <property type="project" value="UniProtKB-UniRule"/>
</dbReference>
<dbReference type="GO" id="GO:0020037">
    <property type="term" value="F:heme binding"/>
    <property type="evidence" value="ECO:0007669"/>
    <property type="project" value="InterPro"/>
</dbReference>
<dbReference type="GO" id="GO:0005506">
    <property type="term" value="F:iron ion binding"/>
    <property type="evidence" value="ECO:0007669"/>
    <property type="project" value="UniProtKB-UniRule"/>
</dbReference>
<dbReference type="GO" id="GO:0009767">
    <property type="term" value="P:photosynthetic electron transport chain"/>
    <property type="evidence" value="ECO:0007669"/>
    <property type="project" value="InterPro"/>
</dbReference>
<dbReference type="Gene3D" id="1.20.5.860">
    <property type="entry name" value="Photosystem II cytochrome b559, alpha subunit"/>
    <property type="match status" value="1"/>
</dbReference>
<dbReference type="HAMAP" id="MF_00642">
    <property type="entry name" value="PSII_PsbE"/>
    <property type="match status" value="1"/>
</dbReference>
<dbReference type="InterPro" id="IPR006217">
    <property type="entry name" value="PSII_cyt_b559_asu"/>
</dbReference>
<dbReference type="InterPro" id="IPR037025">
    <property type="entry name" value="PSII_cyt_b559_asu_sf"/>
</dbReference>
<dbReference type="InterPro" id="IPR006216">
    <property type="entry name" value="PSII_cyt_b559_CS"/>
</dbReference>
<dbReference type="InterPro" id="IPR013081">
    <property type="entry name" value="PSII_cyt_b559_N"/>
</dbReference>
<dbReference type="InterPro" id="IPR013082">
    <property type="entry name" value="PSII_cytb559_asu_lum"/>
</dbReference>
<dbReference type="NCBIfam" id="TIGR01332">
    <property type="entry name" value="cyt_b559_alpha"/>
    <property type="match status" value="1"/>
</dbReference>
<dbReference type="PANTHER" id="PTHR33391">
    <property type="entry name" value="CYTOCHROME B559 SUBUNIT BETA-RELATED"/>
    <property type="match status" value="1"/>
</dbReference>
<dbReference type="PANTHER" id="PTHR33391:SF9">
    <property type="entry name" value="CYTOCHROME B559 SUBUNIT BETA-RELATED"/>
    <property type="match status" value="1"/>
</dbReference>
<dbReference type="Pfam" id="PF00283">
    <property type="entry name" value="Cytochrom_B559"/>
    <property type="match status" value="1"/>
</dbReference>
<dbReference type="Pfam" id="PF00284">
    <property type="entry name" value="Cytochrom_B559a"/>
    <property type="match status" value="1"/>
</dbReference>
<dbReference type="PIRSF" id="PIRSF000036">
    <property type="entry name" value="PsbE"/>
    <property type="match status" value="1"/>
</dbReference>
<dbReference type="SUPFAM" id="SSF161045">
    <property type="entry name" value="Cytochrome b559 subunits"/>
    <property type="match status" value="1"/>
</dbReference>
<dbReference type="PROSITE" id="PS00537">
    <property type="entry name" value="CYTOCHROME_B559"/>
    <property type="match status" value="1"/>
</dbReference>
<feature type="chain" id="PRO_1000082701" description="Cytochrome b559 subunit alpha">
    <location>
        <begin position="1"/>
        <end position="83"/>
    </location>
</feature>
<feature type="transmembrane region" description="Helical" evidence="1">
    <location>
        <begin position="21"/>
        <end position="35"/>
    </location>
</feature>
<feature type="binding site" description="axial binding residue" evidence="1">
    <location>
        <position position="23"/>
    </location>
    <ligand>
        <name>heme</name>
        <dbReference type="ChEBI" id="CHEBI:30413"/>
        <note>ligand shared with beta subunit</note>
    </ligand>
    <ligandPart>
        <name>Fe</name>
        <dbReference type="ChEBI" id="CHEBI:18248"/>
    </ligandPart>
</feature>
<feature type="helix" evidence="2">
    <location>
        <begin position="18"/>
        <end position="39"/>
    </location>
</feature>
<feature type="helix" evidence="2">
    <location>
        <begin position="42"/>
        <end position="47"/>
    </location>
</feature>
<feature type="turn" evidence="2">
    <location>
        <begin position="52"/>
        <end position="54"/>
    </location>
</feature>
<feature type="helix" evidence="2">
    <location>
        <begin position="72"/>
        <end position="79"/>
    </location>
</feature>
<evidence type="ECO:0000255" key="1">
    <source>
        <dbReference type="HAMAP-Rule" id="MF_00642"/>
    </source>
</evidence>
<evidence type="ECO:0007829" key="2">
    <source>
        <dbReference type="PDB" id="7YMI"/>
    </source>
</evidence>
<keyword id="KW-0002">3D-structure</keyword>
<keyword id="KW-0249">Electron transport</keyword>
<keyword id="KW-0349">Heme</keyword>
<keyword id="KW-0408">Iron</keyword>
<keyword id="KW-0472">Membrane</keyword>
<keyword id="KW-0479">Metal-binding</keyword>
<keyword id="KW-0602">Photosynthesis</keyword>
<keyword id="KW-0604">Photosystem II</keyword>
<keyword id="KW-1185">Reference proteome</keyword>
<keyword id="KW-0793">Thylakoid</keyword>
<keyword id="KW-0812">Transmembrane</keyword>
<keyword id="KW-1133">Transmembrane helix</keyword>
<keyword id="KW-0813">Transport</keyword>
<reference key="1">
    <citation type="journal article" date="2008" name="Proc. Natl. Acad. Sci. U.S.A.">
        <title>Niche adaptation and genome expansion in the chlorophyll d-producing cyanobacterium Acaryochloris marina.</title>
        <authorList>
            <person name="Swingley W.D."/>
            <person name="Chen M."/>
            <person name="Cheung P.C."/>
            <person name="Conrad A.L."/>
            <person name="Dejesa L.C."/>
            <person name="Hao J."/>
            <person name="Honchak B.M."/>
            <person name="Karbach L.E."/>
            <person name="Kurdoglu A."/>
            <person name="Lahiri S."/>
            <person name="Mastrian S.D."/>
            <person name="Miyashita H."/>
            <person name="Page L."/>
            <person name="Ramakrishna P."/>
            <person name="Satoh S."/>
            <person name="Sattley W.M."/>
            <person name="Shimada Y."/>
            <person name="Taylor H.L."/>
            <person name="Tomo T."/>
            <person name="Tsuchiya T."/>
            <person name="Wang Z.T."/>
            <person name="Raymond J."/>
            <person name="Mimuro M."/>
            <person name="Blankenship R.E."/>
            <person name="Touchman J.W."/>
        </authorList>
    </citation>
    <scope>NUCLEOTIDE SEQUENCE [LARGE SCALE GENOMIC DNA]</scope>
    <source>
        <strain>MBIC 11017</strain>
    </source>
</reference>
<accession>B0C6T2</accession>
<protein>
    <recommendedName>
        <fullName evidence="1">Cytochrome b559 subunit alpha</fullName>
    </recommendedName>
    <alternativeName>
        <fullName evidence="1">PSII reaction center subunit V</fullName>
    </alternativeName>
</protein>
<sequence>MSGRTGERPFGDIVTSIRYWIIHTITVPMLFLAGWLFVSTGLAYDVFGTPRPNEYFDQARQGLPLVTDRYEGKQQIDEFTKGL</sequence>
<gene>
    <name evidence="1" type="primary">psbE</name>
    <name type="ordered locus">AM1_2630</name>
</gene>
<proteinExistence type="evidence at protein level"/>
<name>PSBE_ACAM1</name>
<organism>
    <name type="scientific">Acaryochloris marina (strain MBIC 11017)</name>
    <dbReference type="NCBI Taxonomy" id="329726"/>
    <lineage>
        <taxon>Bacteria</taxon>
        <taxon>Bacillati</taxon>
        <taxon>Cyanobacteriota</taxon>
        <taxon>Cyanophyceae</taxon>
        <taxon>Acaryochloridales</taxon>
        <taxon>Acaryochloridaceae</taxon>
        <taxon>Acaryochloris</taxon>
    </lineage>
</organism>
<comment type="function">
    <text evidence="1">This b-type cytochrome is tightly associated with the reaction center of photosystem II (PSII). PSII is a light-driven water:plastoquinone oxidoreductase that uses light energy to abstract electrons from H(2)O, generating O(2) and a proton gradient subsequently used for ATP formation. It consists of a core antenna complex that captures photons, and an electron transfer chain that converts photonic excitation into a charge separation.</text>
</comment>
<comment type="cofactor">
    <cofactor evidence="1">
        <name>heme b</name>
        <dbReference type="ChEBI" id="CHEBI:60344"/>
    </cofactor>
    <text evidence="1">With its partner (PsbF) binds heme. PSII binds additional chlorophylls, carotenoids and specific lipids.</text>
</comment>
<comment type="subunit">
    <text evidence="1">Heterodimer of an alpha subunit and a beta subunit. PSII is composed of 1 copy each of membrane proteins PsbA, PsbB, PsbC, PsbD, PsbE, PsbF, PsbH, PsbI, PsbJ, PsbK, PsbL, PsbM, PsbT, PsbX, PsbY, PsbZ, Psb30/Ycf12, peripheral proteins PsbO, CyanoQ (PsbQ), PsbU, PsbV and a large number of cofactors. It forms dimeric complexes.</text>
</comment>
<comment type="subcellular location">
    <subcellularLocation>
        <location evidence="1">Cellular thylakoid membrane</location>
        <topology evidence="1">Single-pass membrane protein</topology>
    </subcellularLocation>
</comment>
<comment type="similarity">
    <text evidence="1">Belongs to the PsbE/PsbF family.</text>
</comment>